<comment type="function">
    <text evidence="1">Endoribonuclease that initiates mRNA decay.</text>
</comment>
<comment type="subcellular location">
    <subcellularLocation>
        <location evidence="1">Cell membrane</location>
        <topology evidence="1">Single-pass membrane protein</topology>
    </subcellularLocation>
</comment>
<comment type="similarity">
    <text evidence="1">Belongs to the RNase Y family.</text>
</comment>
<accession>Q04J36</accession>
<organism>
    <name type="scientific">Streptococcus pneumoniae serotype 2 (strain D39 / NCTC 7466)</name>
    <dbReference type="NCBI Taxonomy" id="373153"/>
    <lineage>
        <taxon>Bacteria</taxon>
        <taxon>Bacillati</taxon>
        <taxon>Bacillota</taxon>
        <taxon>Bacilli</taxon>
        <taxon>Lactobacillales</taxon>
        <taxon>Streptococcaceae</taxon>
        <taxon>Streptococcus</taxon>
    </lineage>
</organism>
<keyword id="KW-1003">Cell membrane</keyword>
<keyword id="KW-0255">Endonuclease</keyword>
<keyword id="KW-0378">Hydrolase</keyword>
<keyword id="KW-0472">Membrane</keyword>
<keyword id="KW-0540">Nuclease</keyword>
<keyword id="KW-1185">Reference proteome</keyword>
<keyword id="KW-0694">RNA-binding</keyword>
<keyword id="KW-0812">Transmembrane</keyword>
<keyword id="KW-1133">Transmembrane helix</keyword>
<gene>
    <name evidence="1" type="primary">rny</name>
    <name type="ordered locus">SPD_1549</name>
</gene>
<protein>
    <recommendedName>
        <fullName evidence="1">Ribonuclease Y</fullName>
        <shortName evidence="1">RNase Y</shortName>
        <ecNumber evidence="1">3.1.-.-</ecNumber>
    </recommendedName>
</protein>
<evidence type="ECO:0000255" key="1">
    <source>
        <dbReference type="HAMAP-Rule" id="MF_00335"/>
    </source>
</evidence>
<evidence type="ECO:0000255" key="2">
    <source>
        <dbReference type="PROSITE-ProRule" id="PRU01175"/>
    </source>
</evidence>
<evidence type="ECO:0000256" key="3">
    <source>
        <dbReference type="SAM" id="MobiDB-lite"/>
    </source>
</evidence>
<feature type="chain" id="PRO_0000344942" description="Ribonuclease Y">
    <location>
        <begin position="1"/>
        <end position="537"/>
    </location>
</feature>
<feature type="transmembrane region" description="Helical" evidence="1">
    <location>
        <begin position="3"/>
        <end position="23"/>
    </location>
</feature>
<feature type="domain" description="KH" evidence="1">
    <location>
        <begin position="227"/>
        <end position="290"/>
    </location>
</feature>
<feature type="domain" description="HD" evidence="2">
    <location>
        <begin position="353"/>
        <end position="446"/>
    </location>
</feature>
<feature type="region of interest" description="Disordered" evidence="3">
    <location>
        <begin position="114"/>
        <end position="144"/>
    </location>
</feature>
<dbReference type="EC" id="3.1.-.-" evidence="1"/>
<dbReference type="EMBL" id="CP000410">
    <property type="protein sequence ID" value="ABJ55165.1"/>
    <property type="molecule type" value="Genomic_DNA"/>
</dbReference>
<dbReference type="RefSeq" id="WP_000404940.1">
    <property type="nucleotide sequence ID" value="NZ_JAMLJR010000003.1"/>
</dbReference>
<dbReference type="SMR" id="Q04J36"/>
<dbReference type="PaxDb" id="373153-SPD_1549"/>
<dbReference type="KEGG" id="spd:SPD_1549"/>
<dbReference type="eggNOG" id="COG1418">
    <property type="taxonomic scope" value="Bacteria"/>
</dbReference>
<dbReference type="eggNOG" id="COG3599">
    <property type="taxonomic scope" value="Bacteria"/>
</dbReference>
<dbReference type="HOGENOM" id="CLU_028328_1_0_9"/>
<dbReference type="BioCyc" id="SPNE373153:G1G6V-1672-MONOMER"/>
<dbReference type="Proteomes" id="UP000001452">
    <property type="component" value="Chromosome"/>
</dbReference>
<dbReference type="GO" id="GO:0005886">
    <property type="term" value="C:plasma membrane"/>
    <property type="evidence" value="ECO:0007669"/>
    <property type="project" value="UniProtKB-SubCell"/>
</dbReference>
<dbReference type="GO" id="GO:0003723">
    <property type="term" value="F:RNA binding"/>
    <property type="evidence" value="ECO:0007669"/>
    <property type="project" value="UniProtKB-UniRule"/>
</dbReference>
<dbReference type="GO" id="GO:0004521">
    <property type="term" value="F:RNA endonuclease activity"/>
    <property type="evidence" value="ECO:0007669"/>
    <property type="project" value="UniProtKB-UniRule"/>
</dbReference>
<dbReference type="GO" id="GO:0006402">
    <property type="term" value="P:mRNA catabolic process"/>
    <property type="evidence" value="ECO:0007669"/>
    <property type="project" value="UniProtKB-UniRule"/>
</dbReference>
<dbReference type="CDD" id="cd00077">
    <property type="entry name" value="HDc"/>
    <property type="match status" value="1"/>
</dbReference>
<dbReference type="CDD" id="cd22431">
    <property type="entry name" value="KH-I_RNaseY"/>
    <property type="match status" value="1"/>
</dbReference>
<dbReference type="FunFam" id="1.10.3210.10:FF:000003">
    <property type="entry name" value="Ribonuclease Y"/>
    <property type="match status" value="1"/>
</dbReference>
<dbReference type="Gene3D" id="1.10.3210.10">
    <property type="entry name" value="Hypothetical protein af1432"/>
    <property type="match status" value="1"/>
</dbReference>
<dbReference type="Gene3D" id="3.30.1370.10">
    <property type="entry name" value="K Homology domain, type 1"/>
    <property type="match status" value="1"/>
</dbReference>
<dbReference type="HAMAP" id="MF_00335">
    <property type="entry name" value="RNase_Y"/>
    <property type="match status" value="1"/>
</dbReference>
<dbReference type="InterPro" id="IPR003607">
    <property type="entry name" value="HD/PDEase_dom"/>
</dbReference>
<dbReference type="InterPro" id="IPR006674">
    <property type="entry name" value="HD_domain"/>
</dbReference>
<dbReference type="InterPro" id="IPR006675">
    <property type="entry name" value="HDIG_dom"/>
</dbReference>
<dbReference type="InterPro" id="IPR004087">
    <property type="entry name" value="KH_dom"/>
</dbReference>
<dbReference type="InterPro" id="IPR004088">
    <property type="entry name" value="KH_dom_type_1"/>
</dbReference>
<dbReference type="InterPro" id="IPR036612">
    <property type="entry name" value="KH_dom_type_1_sf"/>
</dbReference>
<dbReference type="InterPro" id="IPR017705">
    <property type="entry name" value="Ribonuclease_Y"/>
</dbReference>
<dbReference type="InterPro" id="IPR022711">
    <property type="entry name" value="RNase_Y_N"/>
</dbReference>
<dbReference type="NCBIfam" id="TIGR00277">
    <property type="entry name" value="HDIG"/>
    <property type="match status" value="1"/>
</dbReference>
<dbReference type="NCBIfam" id="NF000997">
    <property type="entry name" value="PRK00106.1"/>
    <property type="match status" value="1"/>
</dbReference>
<dbReference type="NCBIfam" id="TIGR03319">
    <property type="entry name" value="RNase_Y"/>
    <property type="match status" value="1"/>
</dbReference>
<dbReference type="PANTHER" id="PTHR12826">
    <property type="entry name" value="RIBONUCLEASE Y"/>
    <property type="match status" value="1"/>
</dbReference>
<dbReference type="PANTHER" id="PTHR12826:SF15">
    <property type="entry name" value="RIBONUCLEASE Y"/>
    <property type="match status" value="1"/>
</dbReference>
<dbReference type="Pfam" id="PF01966">
    <property type="entry name" value="HD"/>
    <property type="match status" value="1"/>
</dbReference>
<dbReference type="Pfam" id="PF00013">
    <property type="entry name" value="KH_1"/>
    <property type="match status" value="1"/>
</dbReference>
<dbReference type="Pfam" id="PF12072">
    <property type="entry name" value="RNase_Y_N"/>
    <property type="match status" value="1"/>
</dbReference>
<dbReference type="SMART" id="SM00471">
    <property type="entry name" value="HDc"/>
    <property type="match status" value="1"/>
</dbReference>
<dbReference type="SMART" id="SM00322">
    <property type="entry name" value="KH"/>
    <property type="match status" value="1"/>
</dbReference>
<dbReference type="SUPFAM" id="SSF54791">
    <property type="entry name" value="Eukaryotic type KH-domain (KH-domain type I)"/>
    <property type="match status" value="1"/>
</dbReference>
<dbReference type="SUPFAM" id="SSF109604">
    <property type="entry name" value="HD-domain/PDEase-like"/>
    <property type="match status" value="1"/>
</dbReference>
<dbReference type="PROSITE" id="PS51831">
    <property type="entry name" value="HD"/>
    <property type="match status" value="1"/>
</dbReference>
<dbReference type="PROSITE" id="PS50084">
    <property type="entry name" value="KH_TYPE_1"/>
    <property type="match status" value="1"/>
</dbReference>
<sequence>MEIMSLAIAVFAVIIGLVIGYVSISAKMKSSQEAAELMLLNAEQEATNLRGQAEREADLLVNEAKRESKSLKKEALLEAKEEARKYREEVDAEFKSERQELKQIESRLTERATSLDRKDDNLTSKEQTLEQKEQSISDRAKNLDAREEQLEEVERQKEAELERIGALSQAEARDIILAQTEENLTREIASRIREAEQEVKERSDKMAKDILVQAMQRIAGEYVAESTNSTVHLPDDTMKGRIIGREGRNIRTFESLTGVDVIIDDTPEVVTLSGFDPIRREIARMTMEMLLKDGRIHPARIEELVEKNRQEIDNKIREYGEAAAYEIGAPNLHPDLMKIMGRLQFRTSYGQNVLRHSIEVAKLAGIMASELGENAALARRAGFLHDIGKAIDHEVEGSHVEIGMELARKYKEPPVVVNTIASHHGDVEAESVIAVIVAAADALSAARPGARSESLESYIKRLHDLEEIANGFEGVQTSFALQAGREIRIMVNPGKIKDDKVTILAHKVRKKIENNLDYPGNIKVTVIRELRAVDYAK</sequence>
<reference key="1">
    <citation type="journal article" date="2007" name="J. Bacteriol.">
        <title>Genome sequence of Avery's virulent serotype 2 strain D39 of Streptococcus pneumoniae and comparison with that of unencapsulated laboratory strain R6.</title>
        <authorList>
            <person name="Lanie J.A."/>
            <person name="Ng W.-L."/>
            <person name="Kazmierczak K.M."/>
            <person name="Andrzejewski T.M."/>
            <person name="Davidsen T.M."/>
            <person name="Wayne K.J."/>
            <person name="Tettelin H."/>
            <person name="Glass J.I."/>
            <person name="Winkler M.E."/>
        </authorList>
    </citation>
    <scope>NUCLEOTIDE SEQUENCE [LARGE SCALE GENOMIC DNA]</scope>
    <source>
        <strain>D39 / NCTC 7466</strain>
    </source>
</reference>
<proteinExistence type="inferred from homology"/>
<name>RNY_STRP2</name>